<proteinExistence type="inferred from homology"/>
<name>BXB7_BOMMO</name>
<sequence length="90" mass="10028">MMKTSVMLMLVVVISLMCSGEAQEVARTYCGRHLADTLADLCFGVEKRGGAQYAPYFWTRQYLGSRGKRGVVDECCFRPCTLDVLLSYCG</sequence>
<organism>
    <name type="scientific">Bombyx mori</name>
    <name type="common">Silk moth</name>
    <dbReference type="NCBI Taxonomy" id="7091"/>
    <lineage>
        <taxon>Eukaryota</taxon>
        <taxon>Metazoa</taxon>
        <taxon>Ecdysozoa</taxon>
        <taxon>Arthropoda</taxon>
        <taxon>Hexapoda</taxon>
        <taxon>Insecta</taxon>
        <taxon>Pterygota</taxon>
        <taxon>Neoptera</taxon>
        <taxon>Endopterygota</taxon>
        <taxon>Lepidoptera</taxon>
        <taxon>Glossata</taxon>
        <taxon>Ditrysia</taxon>
        <taxon>Bombycoidea</taxon>
        <taxon>Bombycidae</taxon>
        <taxon>Bombycinae</taxon>
        <taxon>Bombyx</taxon>
    </lineage>
</organism>
<dbReference type="EMBL" id="D00782">
    <property type="protein sequence ID" value="BAA00678.1"/>
    <property type="molecule type" value="Genomic_DNA"/>
</dbReference>
<dbReference type="EMBL" id="D00783">
    <property type="protein sequence ID" value="BAA00679.1"/>
    <property type="molecule type" value="Genomic_DNA"/>
</dbReference>
<dbReference type="PIR" id="S69487">
    <property type="entry name" value="S69487"/>
</dbReference>
<dbReference type="PIR" id="S69488">
    <property type="entry name" value="S69488"/>
</dbReference>
<dbReference type="RefSeq" id="NP_001121789.1">
    <property type="nucleotide sequence ID" value="NM_001128317.1"/>
</dbReference>
<dbReference type="FunCoup" id="P26741">
    <property type="interactions" value="162"/>
</dbReference>
<dbReference type="GeneID" id="100169716"/>
<dbReference type="KEGG" id="bmor:100169716"/>
<dbReference type="CTD" id="100169716"/>
<dbReference type="HOGENOM" id="CLU_125164_2_0_1"/>
<dbReference type="InParanoid" id="P26741"/>
<dbReference type="OrthoDB" id="493443at7088"/>
<dbReference type="Proteomes" id="UP000005204">
    <property type="component" value="Unassembled WGS sequence"/>
</dbReference>
<dbReference type="GO" id="GO:0005615">
    <property type="term" value="C:extracellular space"/>
    <property type="evidence" value="ECO:0007669"/>
    <property type="project" value="InterPro"/>
</dbReference>
<dbReference type="GO" id="GO:0008083">
    <property type="term" value="F:growth factor activity"/>
    <property type="evidence" value="ECO:0007669"/>
    <property type="project" value="InterPro"/>
</dbReference>
<dbReference type="GO" id="GO:0005179">
    <property type="term" value="F:hormone activity"/>
    <property type="evidence" value="ECO:0007669"/>
    <property type="project" value="UniProtKB-KW"/>
</dbReference>
<dbReference type="GO" id="GO:0005159">
    <property type="term" value="F:insulin-like growth factor receptor binding"/>
    <property type="evidence" value="ECO:0007669"/>
    <property type="project" value="TreeGrafter"/>
</dbReference>
<dbReference type="GO" id="GO:0043539">
    <property type="term" value="F:protein serine/threonine kinase activator activity"/>
    <property type="evidence" value="ECO:0007669"/>
    <property type="project" value="TreeGrafter"/>
</dbReference>
<dbReference type="GO" id="GO:0042104">
    <property type="term" value="P:positive regulation of activated T cell proliferation"/>
    <property type="evidence" value="ECO:0007669"/>
    <property type="project" value="TreeGrafter"/>
</dbReference>
<dbReference type="GO" id="GO:0046628">
    <property type="term" value="P:positive regulation of insulin receptor signaling pathway"/>
    <property type="evidence" value="ECO:0007669"/>
    <property type="project" value="TreeGrafter"/>
</dbReference>
<dbReference type="GO" id="GO:0043410">
    <property type="term" value="P:positive regulation of MAPK cascade"/>
    <property type="evidence" value="ECO:0007669"/>
    <property type="project" value="TreeGrafter"/>
</dbReference>
<dbReference type="GO" id="GO:0045944">
    <property type="term" value="P:positive regulation of transcription by RNA polymerase II"/>
    <property type="evidence" value="ECO:0007669"/>
    <property type="project" value="TreeGrafter"/>
</dbReference>
<dbReference type="GO" id="GO:1905564">
    <property type="term" value="P:positive regulation of vascular endothelial cell proliferation"/>
    <property type="evidence" value="ECO:0007669"/>
    <property type="project" value="TreeGrafter"/>
</dbReference>
<dbReference type="GO" id="GO:0051147">
    <property type="term" value="P:regulation of muscle cell differentiation"/>
    <property type="evidence" value="ECO:0007669"/>
    <property type="project" value="TreeGrafter"/>
</dbReference>
<dbReference type="CDD" id="cd04366">
    <property type="entry name" value="IlGF_insulin_bombyxin_like"/>
    <property type="match status" value="1"/>
</dbReference>
<dbReference type="Gene3D" id="1.10.100.10">
    <property type="entry name" value="Insulin-like"/>
    <property type="match status" value="1"/>
</dbReference>
<dbReference type="InterPro" id="IPR017097">
    <property type="entry name" value="Bombyxin"/>
</dbReference>
<dbReference type="InterPro" id="IPR027285">
    <property type="entry name" value="Bombyxin_B"/>
</dbReference>
<dbReference type="InterPro" id="IPR016179">
    <property type="entry name" value="Insulin-like"/>
</dbReference>
<dbReference type="InterPro" id="IPR036438">
    <property type="entry name" value="Insulin-like_sf"/>
</dbReference>
<dbReference type="InterPro" id="IPR022353">
    <property type="entry name" value="Insulin_CS"/>
</dbReference>
<dbReference type="InterPro" id="IPR022352">
    <property type="entry name" value="Insulin_family"/>
</dbReference>
<dbReference type="PANTHER" id="PTHR46886">
    <property type="entry name" value="INSULIN-LIKE GROWTH FACTOR II"/>
    <property type="match status" value="1"/>
</dbReference>
<dbReference type="PANTHER" id="PTHR46886:SF1">
    <property type="entry name" value="INSULIN-LIKE GROWTH FACTOR II"/>
    <property type="match status" value="1"/>
</dbReference>
<dbReference type="Pfam" id="PF00049">
    <property type="entry name" value="Insulin"/>
    <property type="match status" value="1"/>
</dbReference>
<dbReference type="PIRSF" id="PIRSF037038">
    <property type="entry name" value="Bombyxin"/>
    <property type="match status" value="1"/>
</dbReference>
<dbReference type="PIRSF" id="PIRSF500313">
    <property type="entry name" value="Bombyxin_B"/>
    <property type="match status" value="1"/>
</dbReference>
<dbReference type="PRINTS" id="PR02003">
    <property type="entry name" value="BOMBYXIN"/>
</dbReference>
<dbReference type="PRINTS" id="PR00276">
    <property type="entry name" value="INSULINFAMLY"/>
</dbReference>
<dbReference type="SMART" id="SM00078">
    <property type="entry name" value="IlGF"/>
    <property type="match status" value="1"/>
</dbReference>
<dbReference type="SUPFAM" id="SSF56994">
    <property type="entry name" value="Insulin-like"/>
    <property type="match status" value="1"/>
</dbReference>
<dbReference type="PROSITE" id="PS00262">
    <property type="entry name" value="INSULIN"/>
    <property type="match status" value="1"/>
</dbReference>
<comment type="function">
    <text>Brain peptide responsible for activation of prothoracic glands to produce ecdysone in insects.</text>
</comment>
<comment type="subunit">
    <text>Heterodimer of a B chain and an A chain linked by two disulfide bonds.</text>
</comment>
<comment type="subcellular location">
    <subcellularLocation>
        <location>Secreted</location>
    </subcellularLocation>
</comment>
<comment type="miscellaneous">
    <text>Silk worm has two kinds of PTTH: 4K-PTTH and 22K-PTTH; there are many forms of 4K-PTTH.</text>
</comment>
<comment type="similarity">
    <text evidence="3">Belongs to the insulin family.</text>
</comment>
<accession>P26741</accession>
<accession>Q17195</accession>
<gene>
    <name type="primary">BBXB7</name>
</gene>
<feature type="signal peptide" evidence="2">
    <location>
        <begin position="1"/>
        <end position="20"/>
    </location>
</feature>
<feature type="peptide" id="PRO_0000016007" description="Bombyxin B-7 B chain">
    <location>
        <begin position="21"/>
        <end position="46"/>
    </location>
</feature>
<feature type="propeptide" id="PRO_0000016008" description="C peptide like">
    <location>
        <begin position="49"/>
        <end position="67"/>
    </location>
</feature>
<feature type="peptide" id="PRO_0000016009" description="Bombyxin B-7 A chain">
    <location>
        <begin position="70"/>
        <end position="90"/>
    </location>
</feature>
<feature type="disulfide bond" description="Interchain (between B and A chains)" evidence="1">
    <location>
        <begin position="30"/>
        <end position="76"/>
    </location>
</feature>
<feature type="disulfide bond" description="Interchain (between B and A chains)" evidence="1">
    <location>
        <begin position="42"/>
        <end position="89"/>
    </location>
</feature>
<feature type="disulfide bond" evidence="1">
    <location>
        <begin position="75"/>
        <end position="80"/>
    </location>
</feature>
<feature type="sequence variant" description="In strain: Showa.">
    <original>M</original>
    <variation>I</variation>
    <location>
        <position position="17"/>
    </location>
</feature>
<feature type="sequence variant" description="In strain: Showa.">
    <original>G</original>
    <variation>S</variation>
    <location>
        <position position="49"/>
    </location>
</feature>
<feature type="sequence variant" description="In strain: Showa.">
    <original>Y</original>
    <variation>H</variation>
    <location>
        <position position="62"/>
    </location>
</feature>
<feature type="sequence variant" description="In strain: Showa.">
    <original>S</original>
    <variation>N</variation>
    <location>
        <position position="65"/>
    </location>
</feature>
<keyword id="KW-0165">Cleavage on pair of basic residues</keyword>
<keyword id="KW-1015">Disulfide bond</keyword>
<keyword id="KW-0372">Hormone</keyword>
<keyword id="KW-1185">Reference proteome</keyword>
<keyword id="KW-0964">Secreted</keyword>
<keyword id="KW-0732">Signal</keyword>
<evidence type="ECO:0000250" key="1"/>
<evidence type="ECO:0000255" key="2"/>
<evidence type="ECO:0000305" key="3"/>
<protein>
    <recommendedName>
        <fullName>Bombyxin B-7</fullName>
        <shortName>BBX-B7</shortName>
    </recommendedName>
    <alternativeName>
        <fullName>4K-prothoracicotropic hormone</fullName>
        <shortName>4K-PTTH</shortName>
    </alternativeName>
    <component>
        <recommendedName>
            <fullName>Bombyxin B-7 B chain</fullName>
        </recommendedName>
    </component>
    <component>
        <recommendedName>
            <fullName>Bombyxin B-7 A chain</fullName>
        </recommendedName>
    </component>
</protein>
<reference key="1">
    <citation type="journal article" date="1996" name="J. Mol. Biol.">
        <title>Multiple gene copies for bombyxin, an insulin-related peptide of the silkmoth Bombyx mori: structural signs for gene rearrangement and duplication responsible for generation of multiple molecular forms of bombyxin.</title>
        <authorList>
            <person name="Kondo H."/>
            <person name="Ino M."/>
            <person name="Suzuki A."/>
            <person name="Ishizaki H."/>
            <person name="Iwami M."/>
        </authorList>
    </citation>
    <scope>NUCLEOTIDE SEQUENCE [GENOMIC DNA]</scope>
    <source>
        <strain>Kinshu</strain>
        <strain>Showa</strain>
    </source>
</reference>